<dbReference type="EC" id="2.7.11.22" evidence="1"/>
<dbReference type="EC" id="2.7.11.23" evidence="2"/>
<dbReference type="EMBL" id="CR858299">
    <property type="protein sequence ID" value="CAH90536.1"/>
    <property type="molecule type" value="mRNA"/>
</dbReference>
<dbReference type="RefSeq" id="NP_001125286.1">
    <property type="nucleotide sequence ID" value="NM_001131814.1"/>
</dbReference>
<dbReference type="SMR" id="Q5RCH1"/>
<dbReference type="FunCoup" id="Q5RCH1">
    <property type="interactions" value="2527"/>
</dbReference>
<dbReference type="STRING" id="9601.ENSPPYP00000002808"/>
<dbReference type="GeneID" id="100172184"/>
<dbReference type="KEGG" id="pon:100172184"/>
<dbReference type="CTD" id="983"/>
<dbReference type="eggNOG" id="KOG0594">
    <property type="taxonomic scope" value="Eukaryota"/>
</dbReference>
<dbReference type="InParanoid" id="Q5RCH1"/>
<dbReference type="OrthoDB" id="1732493at2759"/>
<dbReference type="Proteomes" id="UP000001595">
    <property type="component" value="Unplaced"/>
</dbReference>
<dbReference type="GO" id="GO:0005813">
    <property type="term" value="C:centrosome"/>
    <property type="evidence" value="ECO:0000250"/>
    <property type="project" value="UniProtKB"/>
</dbReference>
<dbReference type="GO" id="GO:0005739">
    <property type="term" value="C:mitochondrion"/>
    <property type="evidence" value="ECO:0007669"/>
    <property type="project" value="UniProtKB-SubCell"/>
</dbReference>
<dbReference type="GO" id="GO:0072686">
    <property type="term" value="C:mitotic spindle"/>
    <property type="evidence" value="ECO:0000250"/>
    <property type="project" value="UniProtKB"/>
</dbReference>
<dbReference type="GO" id="GO:0005634">
    <property type="term" value="C:nucleus"/>
    <property type="evidence" value="ECO:0007669"/>
    <property type="project" value="UniProtKB-SubCell"/>
</dbReference>
<dbReference type="GO" id="GO:0005524">
    <property type="term" value="F:ATP binding"/>
    <property type="evidence" value="ECO:0007669"/>
    <property type="project" value="UniProtKB-KW"/>
</dbReference>
<dbReference type="GO" id="GO:0004693">
    <property type="term" value="F:cyclin-dependent protein serine/threonine kinase activity"/>
    <property type="evidence" value="ECO:0000250"/>
    <property type="project" value="UniProtKB"/>
</dbReference>
<dbReference type="GO" id="GO:0106310">
    <property type="term" value="F:protein serine kinase activity"/>
    <property type="evidence" value="ECO:0007669"/>
    <property type="project" value="RHEA"/>
</dbReference>
<dbReference type="GO" id="GO:0004674">
    <property type="term" value="F:protein serine/threonine kinase activity"/>
    <property type="evidence" value="ECO:0000250"/>
    <property type="project" value="UniProtKB"/>
</dbReference>
<dbReference type="GO" id="GO:0008353">
    <property type="term" value="F:RNA polymerase II CTD heptapeptide repeat kinase activity"/>
    <property type="evidence" value="ECO:0007669"/>
    <property type="project" value="UniProtKB-EC"/>
</dbReference>
<dbReference type="GO" id="GO:0006915">
    <property type="term" value="P:apoptotic process"/>
    <property type="evidence" value="ECO:0007669"/>
    <property type="project" value="UniProtKB-KW"/>
</dbReference>
<dbReference type="GO" id="GO:0051301">
    <property type="term" value="P:cell division"/>
    <property type="evidence" value="ECO:0007669"/>
    <property type="project" value="UniProtKB-KW"/>
</dbReference>
<dbReference type="GO" id="GO:0000086">
    <property type="term" value="P:G2/M transition of mitotic cell cycle"/>
    <property type="evidence" value="ECO:0000250"/>
    <property type="project" value="UniProtKB"/>
</dbReference>
<dbReference type="GO" id="GO:0090166">
    <property type="term" value="P:Golgi disassembly"/>
    <property type="evidence" value="ECO:0000250"/>
    <property type="project" value="UniProtKB"/>
</dbReference>
<dbReference type="GO" id="GO:0007095">
    <property type="term" value="P:mitotic G2 DNA damage checkpoint signaling"/>
    <property type="evidence" value="ECO:0007669"/>
    <property type="project" value="TreeGrafter"/>
</dbReference>
<dbReference type="GO" id="GO:0018105">
    <property type="term" value="P:peptidyl-serine phosphorylation"/>
    <property type="evidence" value="ECO:0000250"/>
    <property type="project" value="UniProtKB"/>
</dbReference>
<dbReference type="GO" id="GO:0018107">
    <property type="term" value="P:peptidyl-threonine phosphorylation"/>
    <property type="evidence" value="ECO:0000250"/>
    <property type="project" value="UniProtKB"/>
</dbReference>
<dbReference type="GO" id="GO:0034501">
    <property type="term" value="P:protein localization to kinetochore"/>
    <property type="evidence" value="ECO:0000250"/>
    <property type="project" value="UniProtKB"/>
</dbReference>
<dbReference type="GO" id="GO:1902423">
    <property type="term" value="P:regulation of attachment of mitotic spindle microtubules to kinetochore"/>
    <property type="evidence" value="ECO:0000250"/>
    <property type="project" value="UniProtKB"/>
</dbReference>
<dbReference type="GO" id="GO:0042752">
    <property type="term" value="P:regulation of circadian rhythm"/>
    <property type="evidence" value="ECO:0000250"/>
    <property type="project" value="UniProtKB"/>
</dbReference>
<dbReference type="GO" id="GO:0048511">
    <property type="term" value="P:rhythmic process"/>
    <property type="evidence" value="ECO:0007669"/>
    <property type="project" value="UniProtKB-KW"/>
</dbReference>
<dbReference type="CDD" id="cd07861">
    <property type="entry name" value="STKc_CDK1_euk"/>
    <property type="match status" value="1"/>
</dbReference>
<dbReference type="FunFam" id="1.10.510.10:FF:000231">
    <property type="entry name" value="Cyclin-dependent kinase 1"/>
    <property type="match status" value="1"/>
</dbReference>
<dbReference type="FunFam" id="3.30.200.20:FF:000027">
    <property type="entry name" value="Putative Cyclin-dependent kinase 1"/>
    <property type="match status" value="1"/>
</dbReference>
<dbReference type="Gene3D" id="3.30.200.20">
    <property type="entry name" value="Phosphorylase Kinase, domain 1"/>
    <property type="match status" value="1"/>
</dbReference>
<dbReference type="Gene3D" id="1.10.510.10">
    <property type="entry name" value="Transferase(Phosphotransferase) domain 1"/>
    <property type="match status" value="1"/>
</dbReference>
<dbReference type="InterPro" id="IPR050108">
    <property type="entry name" value="CDK"/>
</dbReference>
<dbReference type="InterPro" id="IPR011009">
    <property type="entry name" value="Kinase-like_dom_sf"/>
</dbReference>
<dbReference type="InterPro" id="IPR000719">
    <property type="entry name" value="Prot_kinase_dom"/>
</dbReference>
<dbReference type="InterPro" id="IPR008271">
    <property type="entry name" value="Ser/Thr_kinase_AS"/>
</dbReference>
<dbReference type="PANTHER" id="PTHR24056">
    <property type="entry name" value="CELL DIVISION PROTEIN KINASE"/>
    <property type="match status" value="1"/>
</dbReference>
<dbReference type="PANTHER" id="PTHR24056:SF334">
    <property type="entry name" value="CYCLIN-DEPENDENT KINASE 1"/>
    <property type="match status" value="1"/>
</dbReference>
<dbReference type="Pfam" id="PF00069">
    <property type="entry name" value="Pkinase"/>
    <property type="match status" value="1"/>
</dbReference>
<dbReference type="SMART" id="SM00220">
    <property type="entry name" value="S_TKc"/>
    <property type="match status" value="1"/>
</dbReference>
<dbReference type="SUPFAM" id="SSF56112">
    <property type="entry name" value="Protein kinase-like (PK-like)"/>
    <property type="match status" value="1"/>
</dbReference>
<dbReference type="PROSITE" id="PS50011">
    <property type="entry name" value="PROTEIN_KINASE_DOM"/>
    <property type="match status" value="1"/>
</dbReference>
<dbReference type="PROSITE" id="PS00108">
    <property type="entry name" value="PROTEIN_KINASE_ST"/>
    <property type="match status" value="1"/>
</dbReference>
<organism>
    <name type="scientific">Pongo abelii</name>
    <name type="common">Sumatran orangutan</name>
    <name type="synonym">Pongo pygmaeus abelii</name>
    <dbReference type="NCBI Taxonomy" id="9601"/>
    <lineage>
        <taxon>Eukaryota</taxon>
        <taxon>Metazoa</taxon>
        <taxon>Chordata</taxon>
        <taxon>Craniata</taxon>
        <taxon>Vertebrata</taxon>
        <taxon>Euteleostomi</taxon>
        <taxon>Mammalia</taxon>
        <taxon>Eutheria</taxon>
        <taxon>Euarchontoglires</taxon>
        <taxon>Primates</taxon>
        <taxon>Haplorrhini</taxon>
        <taxon>Catarrhini</taxon>
        <taxon>Hominidae</taxon>
        <taxon>Pongo</taxon>
    </lineage>
</organism>
<proteinExistence type="evidence at transcript level"/>
<comment type="function">
    <text evidence="1 2 3">Plays a key role in the control of the eukaryotic cell cycle by modulating the centrosome cycle as well as mitotic onset; promotes G2-M transition via association with multiple interphase cyclins. Phosphorylates PARVA/actopaxin, APC, AMPH, APC, BARD1, Bcl-xL/BCL2L1, BRCA2, CALD1, CASP8, CDC7, CDC20, CDC25A, CDC25C, CC2D1A, CENPA, CSNK2 proteins/CKII, FZR1/CDH1, CDK7, CEBPB, CHAMP1, DMD/dystrophin, EEF1 proteins/EF-1, EZH2, KIF11/EG5, EGFR, FANCG, FOS, GFAP, GOLGA2/GM130, GRASP1, UBE2A/hHR6A, HIST1H1 proteins/histone H1, HMGA1, HIVEP3/KRC, KAT5, LMNA, LMNB, LBR, LATS1, MAP1B, MAP4, MARCKS, MCM2, MCM4, MKLP1, MLST8, MYB, NEFH, NFIC, NPC/nuclear pore complex, PITPNM1/NIR2, NPM1, NCL, NUCKS1, NPM1/numatrin, ORC1, PRKAR2A, EEF1E1/p18, EIF3F/p47, p53/TP53, NONO/p54NRB, PAPOLA, PLEC/plectin, RB1, TPPP, UL40/R2, RAB4A, RAP1GAP, RBBP8/CtIP, RCC1, RPS6KB1/S6K1, KHDRBS1/SAM68, ESPL1, SKI, BIRC5/survivin, STIP1, TEX14, beta-tubulins, MAPT/TAU, NEDD1, VIM/vimentin, TK1, FOXO1, RUNX1/AML1, SAMHD1, SIRT2, CGAS and RUNX2. CDK1/CDC2-cyclin-B controls pronuclear union in interphase fertilized eggs. Essential for early stages of embryonic development. During G2 and early mitosis, CDC25A/B/C-mediated dephosphorylation activates CDK1/cyclin complexes which phosphorylate several substrates that trigger at least centrosome separation, Golgi dynamics, nuclear envelope breakdown and chromosome condensation. Once chromosomes are condensed and aligned at the metaphase plate, CDK1 activity is switched off by WEE1- and PKMYT1-mediated phosphorylation to allow sister chromatid separation, chromosome decondensation, reformation of the nuclear envelope and cytokinesis. Phosphorylates KRT5 during prometaphase and metaphase (By similarity). Inactivated by PKR/EIF2AK2- and WEE1-mediated phosphorylation upon DNA damage to stop cell cycle and genome replication at the G2 checkpoint thus facilitating DNA repair. Reactivated after successful DNA repair through WIP1-dependent signaling leading to CDC25A/B/C-mediated dephosphorylation and restoring cell cycle progression. Catalyzes lamin (LMNA, LMNB1 and LMNB2) phosphorylation at the onset of mitosis, promoting nuclear envelope breakdown. In proliferating cells, CDK1-mediated FOXO1 phosphorylation at the G2-M phase represses FOXO1 interaction with 14-3-3 proteins and thereby promotes FOXO1 nuclear accumulation and transcription factor activity, leading to cell death of postmitotic neurons. The phosphorylation of beta-tubulins regulates microtubule dynamics during mitosis. NEDD1 phosphorylation promotes PLK1-mediated NEDD1 phosphorylation and subsequent targeting of the gamma-tubulin ring complex (gTuRC) to the centrosome, an important step for spindle formation. In addition, CC2D1A phosphorylation regulates CC2D1A spindle pole localization and association with SCC1/RAD21 and centriole cohesion during mitosis. The phosphorylation of Bcl-xL/BCL2L1 after prolongated G2 arrest upon DNA damage triggers apoptosis. In contrast, CASP8 phosphorylation during mitosis prevents its activation by proteolysis and subsequent apoptosis. This phosphorylation occurs in cancer cell lines, as well as in primary breast tissues and lymphocytes. EZH2 phosphorylation promotes H3K27me3 maintenance and epigenetic gene silencing. CALD1 phosphorylation promotes Schwann cell migration during peripheral nerve regeneration. CDK1-cyclin-B complex phosphorylates NCKAP5L and mediates its dissociation from centrosomes during mitosis. Regulates the amplitude of the cyclic expression of the core clock gene BMAL1 by phosphorylating its transcriptional repressor NR1D1, and this phosphorylation is necessary for SCF(FBXW7)-mediated ubiquitination and proteasomal degradation of NR1D1 (By similarity). Phosphorylates EML3 at 'Thr-881' which is essential for its interaction with HAUS augmin-like complex and TUBG1 (By similarity). Phosphorylates CGAS during mitosis, leading to its inhibition, thereby preventing CGAS activation by self DNA during mitosis (By similarity). Phosphorylates SKA3 during mitosis which promotes SKA3 binding to the NDC80 complex and anchoring of the SKA complex to kinetochores, to enable stable attachment of mitotic spindle microtubules to kinetochores (By similarity).</text>
</comment>
<comment type="catalytic activity">
    <reaction evidence="1">
        <text>L-seryl-[protein] + ATP = O-phospho-L-seryl-[protein] + ADP + H(+)</text>
        <dbReference type="Rhea" id="RHEA:17989"/>
        <dbReference type="Rhea" id="RHEA-COMP:9863"/>
        <dbReference type="Rhea" id="RHEA-COMP:11604"/>
        <dbReference type="ChEBI" id="CHEBI:15378"/>
        <dbReference type="ChEBI" id="CHEBI:29999"/>
        <dbReference type="ChEBI" id="CHEBI:30616"/>
        <dbReference type="ChEBI" id="CHEBI:83421"/>
        <dbReference type="ChEBI" id="CHEBI:456216"/>
        <dbReference type="EC" id="2.7.11.22"/>
    </reaction>
</comment>
<comment type="catalytic activity">
    <reaction evidence="1">
        <text>L-threonyl-[protein] + ATP = O-phospho-L-threonyl-[protein] + ADP + H(+)</text>
        <dbReference type="Rhea" id="RHEA:46608"/>
        <dbReference type="Rhea" id="RHEA-COMP:11060"/>
        <dbReference type="Rhea" id="RHEA-COMP:11605"/>
        <dbReference type="ChEBI" id="CHEBI:15378"/>
        <dbReference type="ChEBI" id="CHEBI:30013"/>
        <dbReference type="ChEBI" id="CHEBI:30616"/>
        <dbReference type="ChEBI" id="CHEBI:61977"/>
        <dbReference type="ChEBI" id="CHEBI:456216"/>
        <dbReference type="EC" id="2.7.11.22"/>
    </reaction>
</comment>
<comment type="catalytic activity">
    <reaction evidence="2">
        <text>[DNA-directed RNA polymerase] + ATP = phospho-[DNA-directed RNA polymerase] + ADP + H(+)</text>
        <dbReference type="Rhea" id="RHEA:10216"/>
        <dbReference type="Rhea" id="RHEA-COMP:11321"/>
        <dbReference type="Rhea" id="RHEA-COMP:11322"/>
        <dbReference type="ChEBI" id="CHEBI:15378"/>
        <dbReference type="ChEBI" id="CHEBI:30616"/>
        <dbReference type="ChEBI" id="CHEBI:43176"/>
        <dbReference type="ChEBI" id="CHEBI:68546"/>
        <dbReference type="ChEBI" id="CHEBI:456216"/>
        <dbReference type="EC" id="2.7.11.23"/>
    </reaction>
</comment>
<comment type="activity regulation">
    <text evidence="1">Phosphorylation at Thr-14 or Tyr-15 inactivates the enzyme, while phosphorylation at Thr-161 activates it. Activated through a multistep process; binding to cyclin-B is required for relocation of cyclin-kinase complexes to the nucleus, activated by CAK/CDK7-mediated phosphorylation on Thr-161, and CDC25-mediated dephosphorylation of inhibitory phosphorylation on Thr-14 and Tyr-15. Activity is restricted during S-phase in an ATR-dependent manner to prevent premature entry into G2. Repressed by the CDK inhibitors CDKN1A/p21 and CDKN1B/p27 during the G1 phase and by CDKN1A/p21 at the G1-S checkpoint upon DNA damage. Transient activation by rapid and transient dephosphorylation at Tyr-15 triggered by TGFB1.</text>
</comment>
<comment type="subunit">
    <text evidence="1 2">Forms a stable but non-covalent complex with a regulatory subunit and with a cyclin. Interacts with cyclins-B (CCNB1, CCNB2 and CCNB3) to form a serine/threonine kinase holoenzyme complex also known as maturation promoting factor (MPF). The cyclin subunit imparts substrate specificity to the complex. Can also form CDK1-cylin-D and CDK1-cyclin-E complexes that phosphorylate RB1 in vitro. Binds to RB1 and other transcription factors such as FOXO1 and RUNX2. Promotes G2-M transition when in complex with a cyclin-B. Interacts with DLGAP5. Binds to the CDK inhibitors CDKN1A/p21 and CDKN1B/p27. Isoform 2 is unable to complex with cyclin-B1 and also fails to bind to CDKN1A/p21. Interacts with catalytically active CCNB1 and RALBP1 during mitosis to form an endocytotic complex during interphase. Associates with cyclins-A and B1 during S-phase in regenerating hepatocytes. Interacts with FANCC. Interacts with CEP63; this interaction recruits CDK1 to centrosomes. Interacts with CENPA. Interacts with NR1D1 (By similarity). Interacts with proteasome subunit PSMA8; to participate in meiosis progression during spermatogenesis (By similarity).</text>
</comment>
<comment type="subcellular location">
    <subcellularLocation>
        <location evidence="2">Nucleus</location>
    </subcellularLocation>
    <subcellularLocation>
        <location evidence="2">Cytoplasm</location>
    </subcellularLocation>
    <subcellularLocation>
        <location evidence="2">Mitochondrion</location>
    </subcellularLocation>
    <subcellularLocation>
        <location evidence="1">Cytoplasm</location>
        <location evidence="1">Cytoskeleton</location>
        <location evidence="1">Microtubule organizing center</location>
        <location evidence="1">Centrosome</location>
    </subcellularLocation>
    <subcellularLocation>
        <location evidence="1">Cytoplasm</location>
        <location evidence="1">Cytoskeleton</location>
        <location evidence="1">Spindle</location>
    </subcellularLocation>
    <text evidence="1">Colocalizes with SIRT2 on centrosome during prophase and on splindle fibers during metaphase of the mitotic cell cycle (By similarity). Cytoplasmic during the interphase. Reversibly translocated from cytoplasm to nucleus when phosphorylated before G2-M transition when associated with cyclin-B1. Accumulates in mitochondria in G2-arrested cells upon DNA-damage.</text>
</comment>
<comment type="induction">
    <text evidence="6">Follow a cyclic expression; during interphase, accumulates gradually following G1, S to reach a critical threshold at the end of G2, which promotes self-activation and triggers onset of mitosis. Induced transiently by TGFB1 at an early phase of TGFB1-mediated apoptosis (Probable).</text>
</comment>
<comment type="PTM">
    <text evidence="1">Phosphorylation at Thr-161 by CAK/CDK7 activates kinase activity. Phosphorylation at Thr-14 and Tyr-15 by PKMYT1 prevents nuclear translocation. Phosphorylation at Tyr-15 by WEE1 and WEE2 inhibits the protein kinase activity and acts as a negative regulator of entry into mitosis (G2 to M transition). Phosphorylation by PKMYT1 and WEE1 takes place during mitosis to keep CDK1-cyclin-B complexes inactive until the end of G2. By the end of G2, PKMYT1 and WEE1 are inactivated, but CDC25A and CDC25B are activated. Dephosphorylation by active CDC25A and CDC25B at Thr-14 and Tyr-15, leads to CDK1 activation at the G2-M transition. Phosphorylation at Tyr-15 by WEE2 during oogenesis is required to maintain meiotic arrest in oocytes during the germinal vesicle (GV) stage, a long period of quiescence at dictyate prophase I, leading to prevent meiotic reentry. Phosphorylation by WEE2 is also required for metaphase II exit during egg activation to ensure exit from meiosis in oocytes and promote pronuclear formation. Phosphorylated at Tyr-4 by PKR/EIF2AK2 upon genotoxic stress. This phosphorylation triggers CDK1 polyubiquitination and subsequent proteolysis, thus leading to G2 arrest (By similarity).</text>
</comment>
<comment type="PTM">
    <text evidence="1">Polyubiquitinated upon genotoxic stress.</text>
</comment>
<comment type="similarity">
    <text evidence="6">Belongs to the protein kinase superfamily. CMGC Ser/Thr protein kinase family. CDC2/CDKX subfamily.</text>
</comment>
<name>CDK1_PONAB</name>
<keyword id="KW-0007">Acetylation</keyword>
<keyword id="KW-0053">Apoptosis</keyword>
<keyword id="KW-0067">ATP-binding</keyword>
<keyword id="KW-0090">Biological rhythms</keyword>
<keyword id="KW-0131">Cell cycle</keyword>
<keyword id="KW-0132">Cell division</keyword>
<keyword id="KW-0963">Cytoplasm</keyword>
<keyword id="KW-0206">Cytoskeleton</keyword>
<keyword id="KW-1017">Isopeptide bond</keyword>
<keyword id="KW-0418">Kinase</keyword>
<keyword id="KW-0496">Mitochondrion</keyword>
<keyword id="KW-0498">Mitosis</keyword>
<keyword id="KW-0547">Nucleotide-binding</keyword>
<keyword id="KW-0539">Nucleus</keyword>
<keyword id="KW-0597">Phosphoprotein</keyword>
<keyword id="KW-1185">Reference proteome</keyword>
<keyword id="KW-0723">Serine/threonine-protein kinase</keyword>
<keyword id="KW-0808">Transferase</keyword>
<keyword id="KW-0832">Ubl conjugation</keyword>
<sequence length="297" mass="34125">MEDYTKIEKIGEGTYGVVYKGRHKTTGQVVTMKKIRLESEEEGVPSTAIREISLLKELRHPNIVSLQDVLMQDSRLYLIFEFLSMDLKKYLDSIPPGQYMDSSLVKSYLYQILQGIVFCHSRRVLHRDLKPQNLLIDDKGTIKLADFGLARAFGIPIRVYTHEVVTLWYRSPEVLLGSARYSTPVDIWSIGTIFAELATKKPLFHGDSEIDQLFRIFRALGTPNNEVWPEVESLQDYKNTFPKWKPGSLASHVKNLDENGLDLLSKMLIYDPAKRISGKMALNHPYFNDLDNQIKKM</sequence>
<protein>
    <recommendedName>
        <fullName>Cyclin-dependent kinase 1</fullName>
        <shortName>CDK1</shortName>
        <ecNumber evidence="1">2.7.11.22</ecNumber>
        <ecNumber evidence="2">2.7.11.23</ecNumber>
    </recommendedName>
    <alternativeName>
        <fullName>Cell division control protein 2 homolog</fullName>
    </alternativeName>
    <alternativeName>
        <fullName>Cell division protein kinase 1</fullName>
    </alternativeName>
    <alternativeName>
        <fullName>p34 protein kinase</fullName>
    </alternativeName>
</protein>
<feature type="chain" id="PRO_0000085726" description="Cyclin-dependent kinase 1">
    <location>
        <begin position="1"/>
        <end position="297"/>
    </location>
</feature>
<feature type="domain" description="Protein kinase" evidence="4">
    <location>
        <begin position="4"/>
        <end position="287"/>
    </location>
</feature>
<feature type="active site" description="Proton acceptor" evidence="4 5">
    <location>
        <position position="128"/>
    </location>
</feature>
<feature type="binding site" evidence="4">
    <location>
        <begin position="10"/>
        <end position="18"/>
    </location>
    <ligand>
        <name>ATP</name>
        <dbReference type="ChEBI" id="CHEBI:30616"/>
    </ligand>
</feature>
<feature type="binding site" evidence="4">
    <location>
        <position position="33"/>
    </location>
    <ligand>
        <name>ATP</name>
        <dbReference type="ChEBI" id="CHEBI:30616"/>
    </ligand>
</feature>
<feature type="modified residue" description="N-acetylmethionine" evidence="1">
    <location>
        <position position="1"/>
    </location>
</feature>
<feature type="modified residue" description="Phosphotyrosine; by PKR" evidence="1">
    <location>
        <position position="4"/>
    </location>
</feature>
<feature type="modified residue" description="N6-acetyllysine; alternate" evidence="1">
    <location>
        <position position="6"/>
    </location>
</feature>
<feature type="modified residue" description="N6-acetyllysine; alternate" evidence="2">
    <location>
        <position position="9"/>
    </location>
</feature>
<feature type="modified residue" description="Phosphothreonine; by PKMYT1" evidence="1">
    <location>
        <position position="14"/>
    </location>
</feature>
<feature type="modified residue" description="Phosphotyrosine; by PKMYT1, WEE1 and WEE2" evidence="1">
    <location>
        <position position="15"/>
    </location>
</feature>
<feature type="modified residue" description="Phosphotyrosine; by WEE1 and WEE2" evidence="1">
    <location>
        <position position="15"/>
    </location>
</feature>
<feature type="modified residue" description="Phosphotyrosine" evidence="1">
    <location>
        <position position="19"/>
    </location>
</feature>
<feature type="modified residue" description="Phosphoserine" evidence="1">
    <location>
        <position position="39"/>
    </location>
</feature>
<feature type="modified residue" description="Phosphotyrosine" evidence="1">
    <location>
        <position position="77"/>
    </location>
</feature>
<feature type="modified residue" description="Phosphothreonine" evidence="1">
    <location>
        <position position="141"/>
    </location>
</feature>
<feature type="modified residue" description="Phosphothreonine; by CAK" evidence="1">
    <location>
        <position position="161"/>
    </location>
</feature>
<feature type="modified residue" description="Phosphoserine" evidence="1">
    <location>
        <position position="178"/>
    </location>
</feature>
<feature type="modified residue" description="Phosphothreonine" evidence="1">
    <location>
        <position position="222"/>
    </location>
</feature>
<feature type="modified residue" description="N6-succinyllysine" evidence="2">
    <location>
        <position position="245"/>
    </location>
</feature>
<feature type="modified residue" description="Phosphoserine" evidence="1">
    <location>
        <position position="248"/>
    </location>
</feature>
<feature type="cross-link" description="Glycyl lysine isopeptide (Lys-Gly) (interchain with G-Cter in SUMO2); alternate" evidence="1">
    <location>
        <position position="6"/>
    </location>
</feature>
<feature type="cross-link" description="Glycyl lysine isopeptide (Lys-Gly) (interchain with G-Cter in SUMO2); alternate" evidence="1">
    <location>
        <position position="9"/>
    </location>
</feature>
<feature type="cross-link" description="Glycyl lysine isopeptide (Lys-Gly) (interchain with G-Cter in SUMO2)" evidence="1">
    <location>
        <position position="20"/>
    </location>
</feature>
<feature type="cross-link" description="Glycyl lysine isopeptide (Lys-Gly) (interchain with G-Cter in SUMO2)" evidence="1">
    <location>
        <position position="139"/>
    </location>
</feature>
<evidence type="ECO:0000250" key="1">
    <source>
        <dbReference type="UniProtKB" id="P06493"/>
    </source>
</evidence>
<evidence type="ECO:0000250" key="2">
    <source>
        <dbReference type="UniProtKB" id="P11440"/>
    </source>
</evidence>
<evidence type="ECO:0000250" key="3">
    <source>
        <dbReference type="UniProtKB" id="P39951"/>
    </source>
</evidence>
<evidence type="ECO:0000255" key="4">
    <source>
        <dbReference type="PROSITE-ProRule" id="PRU00159"/>
    </source>
</evidence>
<evidence type="ECO:0000255" key="5">
    <source>
        <dbReference type="PROSITE-ProRule" id="PRU10027"/>
    </source>
</evidence>
<evidence type="ECO:0000305" key="6"/>
<reference key="1">
    <citation type="submission" date="2004-11" db="EMBL/GenBank/DDBJ databases">
        <authorList>
            <consortium name="The German cDNA consortium"/>
        </authorList>
    </citation>
    <scope>NUCLEOTIDE SEQUENCE [LARGE SCALE MRNA]</scope>
    <source>
        <tissue>Heart</tissue>
    </source>
</reference>
<gene>
    <name type="primary">CDK1</name>
    <name type="synonym">CDC2</name>
    <name type="synonym">CDKN1</name>
</gene>
<accession>Q5RCH1</accession>